<feature type="chain" id="PRO_0000161468" description="tRNA uridine(34) hydroxylase">
    <location>
        <begin position="1"/>
        <end position="312"/>
    </location>
</feature>
<feature type="domain" description="Rhodanese" evidence="1">
    <location>
        <begin position="130"/>
        <end position="225"/>
    </location>
</feature>
<feature type="active site" description="Cysteine persulfide intermediate" evidence="1">
    <location>
        <position position="185"/>
    </location>
</feature>
<comment type="function">
    <text evidence="1">Catalyzes oxygen-dependent 5-hydroxyuridine (ho5U) modification at position 34 in tRNAs.</text>
</comment>
<comment type="catalytic activity">
    <reaction evidence="1">
        <text>uridine(34) in tRNA + AH2 + O2 = 5-hydroxyuridine(34) in tRNA + A + H2O</text>
        <dbReference type="Rhea" id="RHEA:64224"/>
        <dbReference type="Rhea" id="RHEA-COMP:11727"/>
        <dbReference type="Rhea" id="RHEA-COMP:13381"/>
        <dbReference type="ChEBI" id="CHEBI:13193"/>
        <dbReference type="ChEBI" id="CHEBI:15377"/>
        <dbReference type="ChEBI" id="CHEBI:15379"/>
        <dbReference type="ChEBI" id="CHEBI:17499"/>
        <dbReference type="ChEBI" id="CHEBI:65315"/>
        <dbReference type="ChEBI" id="CHEBI:136877"/>
    </reaction>
</comment>
<comment type="similarity">
    <text evidence="1">Belongs to the TrhO family.</text>
</comment>
<keyword id="KW-0560">Oxidoreductase</keyword>
<keyword id="KW-1185">Reference proteome</keyword>
<keyword id="KW-0819">tRNA processing</keyword>
<proteinExistence type="inferred from homology"/>
<dbReference type="EC" id="1.14.-.-" evidence="1"/>
<dbReference type="EMBL" id="BA000036">
    <property type="protein sequence ID" value="BAC00386.1"/>
    <property type="molecule type" value="Genomic_DNA"/>
</dbReference>
<dbReference type="EMBL" id="BX927157">
    <property type="protein sequence ID" value="CAF18932.1"/>
    <property type="molecule type" value="Genomic_DNA"/>
</dbReference>
<dbReference type="RefSeq" id="NP_602188.1">
    <property type="nucleotide sequence ID" value="NC_003450.3"/>
</dbReference>
<dbReference type="RefSeq" id="WP_011015551.1">
    <property type="nucleotide sequence ID" value="NC_006958.1"/>
</dbReference>
<dbReference type="SMR" id="Q8NLF0"/>
<dbReference type="STRING" id="196627.cg3319"/>
<dbReference type="DNASU" id="3345492"/>
<dbReference type="KEGG" id="cgb:cg3319"/>
<dbReference type="KEGG" id="cgl:Cgl2992"/>
<dbReference type="PATRIC" id="fig|196627.13.peg.2926"/>
<dbReference type="eggNOG" id="COG1054">
    <property type="taxonomic scope" value="Bacteria"/>
</dbReference>
<dbReference type="HOGENOM" id="CLU_038878_1_0_11"/>
<dbReference type="OrthoDB" id="9778326at2"/>
<dbReference type="BioCyc" id="CORYNE:G18NG-12613-MONOMER"/>
<dbReference type="Proteomes" id="UP000000582">
    <property type="component" value="Chromosome"/>
</dbReference>
<dbReference type="Proteomes" id="UP000001009">
    <property type="component" value="Chromosome"/>
</dbReference>
<dbReference type="GO" id="GO:0016705">
    <property type="term" value="F:oxidoreductase activity, acting on paired donors, with incorporation or reduction of molecular oxygen"/>
    <property type="evidence" value="ECO:0007669"/>
    <property type="project" value="UniProtKB-UniRule"/>
</dbReference>
<dbReference type="GO" id="GO:0006400">
    <property type="term" value="P:tRNA modification"/>
    <property type="evidence" value="ECO:0007669"/>
    <property type="project" value="UniProtKB-UniRule"/>
</dbReference>
<dbReference type="CDD" id="cd01518">
    <property type="entry name" value="RHOD_YceA"/>
    <property type="match status" value="1"/>
</dbReference>
<dbReference type="Gene3D" id="3.30.70.100">
    <property type="match status" value="1"/>
</dbReference>
<dbReference type="Gene3D" id="3.40.250.10">
    <property type="entry name" value="Rhodanese-like domain"/>
    <property type="match status" value="1"/>
</dbReference>
<dbReference type="HAMAP" id="MF_00469">
    <property type="entry name" value="TrhO"/>
    <property type="match status" value="1"/>
</dbReference>
<dbReference type="InterPro" id="IPR001763">
    <property type="entry name" value="Rhodanese-like_dom"/>
</dbReference>
<dbReference type="InterPro" id="IPR036873">
    <property type="entry name" value="Rhodanese-like_dom_sf"/>
</dbReference>
<dbReference type="InterPro" id="IPR022111">
    <property type="entry name" value="Rhodanese_C"/>
</dbReference>
<dbReference type="InterPro" id="IPR020936">
    <property type="entry name" value="TrhO"/>
</dbReference>
<dbReference type="InterPro" id="IPR040503">
    <property type="entry name" value="TRHO_N"/>
</dbReference>
<dbReference type="NCBIfam" id="NF001134">
    <property type="entry name" value="PRK00142.1-2"/>
    <property type="match status" value="1"/>
</dbReference>
<dbReference type="PANTHER" id="PTHR43268">
    <property type="entry name" value="THIOSULFATE SULFURTRANSFERASE/RHODANESE-LIKE DOMAIN-CONTAINING PROTEIN 2"/>
    <property type="match status" value="1"/>
</dbReference>
<dbReference type="PANTHER" id="PTHR43268:SF6">
    <property type="entry name" value="THIOSULFATE SULFURTRANSFERASE_RHODANESE-LIKE DOMAIN-CONTAINING PROTEIN 2"/>
    <property type="match status" value="1"/>
</dbReference>
<dbReference type="Pfam" id="PF00581">
    <property type="entry name" value="Rhodanese"/>
    <property type="match status" value="1"/>
</dbReference>
<dbReference type="Pfam" id="PF12368">
    <property type="entry name" value="Rhodanese_C"/>
    <property type="match status" value="1"/>
</dbReference>
<dbReference type="Pfam" id="PF17773">
    <property type="entry name" value="UPF0176_N"/>
    <property type="match status" value="1"/>
</dbReference>
<dbReference type="SMART" id="SM00450">
    <property type="entry name" value="RHOD"/>
    <property type="match status" value="1"/>
</dbReference>
<dbReference type="SUPFAM" id="SSF52821">
    <property type="entry name" value="Rhodanese/Cell cycle control phosphatase"/>
    <property type="match status" value="1"/>
</dbReference>
<dbReference type="PROSITE" id="PS50206">
    <property type="entry name" value="RHODANESE_3"/>
    <property type="match status" value="1"/>
</dbReference>
<organism>
    <name type="scientific">Corynebacterium glutamicum (strain ATCC 13032 / DSM 20300 / JCM 1318 / BCRC 11384 / CCUG 27702 / LMG 3730 / NBRC 12168 / NCIMB 10025 / NRRL B-2784 / 534)</name>
    <dbReference type="NCBI Taxonomy" id="196627"/>
    <lineage>
        <taxon>Bacteria</taxon>
        <taxon>Bacillati</taxon>
        <taxon>Actinomycetota</taxon>
        <taxon>Actinomycetes</taxon>
        <taxon>Mycobacteriales</taxon>
        <taxon>Corynebacteriaceae</taxon>
        <taxon>Corynebacterium</taxon>
    </lineage>
</organism>
<sequence length="312" mass="35074">MATSKILLYYAFTPLSDPKAVQLWQRELCESLNLRGRILISTHGINGTVGGDIDDCKAYIKKTREYPGFNRMQFKWSEGGAEDFPKLSVKVRDEIVAFGAPDELKVDENGVVGGGVHLKPQQVNELVEARGDEVVFFDGRNAMEAQIGKFKDAVVPDVETTHDFIAEIESGKYDDLKDKPVVTYCTGGIRCEILSSLMINRGFKEVYQIDGGIVRYGEQFGNKGLWEGSLYVFDKRMHMEFGEDYKEVGHCIHCDTPTNKFEHCLNEDDCRELVLMCPDCFANVETRHCKRERCAAIAADFAEQGIDPLVTS</sequence>
<accession>Q8NLF0</accession>
<gene>
    <name evidence="1" type="primary">trhO</name>
    <name type="ordered locus">Cgl2992</name>
    <name type="ordered locus">cg3319</name>
</gene>
<name>TRHO_CORGL</name>
<protein>
    <recommendedName>
        <fullName evidence="1">tRNA uridine(34) hydroxylase</fullName>
        <ecNumber evidence="1">1.14.-.-</ecNumber>
    </recommendedName>
    <alternativeName>
        <fullName evidence="1">tRNA hydroxylation protein O</fullName>
    </alternativeName>
</protein>
<reference key="1">
    <citation type="journal article" date="2003" name="Appl. Microbiol. Biotechnol.">
        <title>The Corynebacterium glutamicum genome: features and impacts on biotechnological processes.</title>
        <authorList>
            <person name="Ikeda M."/>
            <person name="Nakagawa S."/>
        </authorList>
    </citation>
    <scope>NUCLEOTIDE SEQUENCE [LARGE SCALE GENOMIC DNA]</scope>
    <source>
        <strain>ATCC 13032 / DSM 20300 / JCM 1318 / BCRC 11384 / CCUG 27702 / LMG 3730 / NBRC 12168 / NCIMB 10025 / NRRL B-2784 / 534</strain>
    </source>
</reference>
<reference key="2">
    <citation type="journal article" date="2003" name="J. Biotechnol.">
        <title>The complete Corynebacterium glutamicum ATCC 13032 genome sequence and its impact on the production of L-aspartate-derived amino acids and vitamins.</title>
        <authorList>
            <person name="Kalinowski J."/>
            <person name="Bathe B."/>
            <person name="Bartels D."/>
            <person name="Bischoff N."/>
            <person name="Bott M."/>
            <person name="Burkovski A."/>
            <person name="Dusch N."/>
            <person name="Eggeling L."/>
            <person name="Eikmanns B.J."/>
            <person name="Gaigalat L."/>
            <person name="Goesmann A."/>
            <person name="Hartmann M."/>
            <person name="Huthmacher K."/>
            <person name="Kraemer R."/>
            <person name="Linke B."/>
            <person name="McHardy A.C."/>
            <person name="Meyer F."/>
            <person name="Moeckel B."/>
            <person name="Pfefferle W."/>
            <person name="Puehler A."/>
            <person name="Rey D.A."/>
            <person name="Rueckert C."/>
            <person name="Rupp O."/>
            <person name="Sahm H."/>
            <person name="Wendisch V.F."/>
            <person name="Wiegraebe I."/>
            <person name="Tauch A."/>
        </authorList>
    </citation>
    <scope>NUCLEOTIDE SEQUENCE [LARGE SCALE GENOMIC DNA]</scope>
    <source>
        <strain>ATCC 13032 / DSM 20300 / JCM 1318 / BCRC 11384 / CCUG 27702 / LMG 3730 / NBRC 12168 / NCIMB 10025 / NRRL B-2784 / 534</strain>
    </source>
</reference>
<evidence type="ECO:0000255" key="1">
    <source>
        <dbReference type="HAMAP-Rule" id="MF_00469"/>
    </source>
</evidence>